<accession>Q0VC22</accession>
<evidence type="ECO:0000250" key="1"/>
<evidence type="ECO:0000255" key="2"/>
<evidence type="ECO:0000255" key="3">
    <source>
        <dbReference type="PROSITE-ProRule" id="PRU01340"/>
    </source>
</evidence>
<evidence type="ECO:0000305" key="4"/>
<dbReference type="EC" id="2.4.2.31"/>
<dbReference type="EMBL" id="BC120389">
    <property type="protein sequence ID" value="AAI20390.1"/>
    <property type="molecule type" value="mRNA"/>
</dbReference>
<dbReference type="RefSeq" id="NP_001069983.1">
    <property type="nucleotide sequence ID" value="NM_001076515.1"/>
</dbReference>
<dbReference type="SMR" id="Q0VC22"/>
<dbReference type="FunCoup" id="Q0VC22">
    <property type="interactions" value="44"/>
</dbReference>
<dbReference type="STRING" id="9913.ENSBTAP00000072541"/>
<dbReference type="GlyCosmos" id="Q0VC22">
    <property type="glycosylation" value="4 sites, No reported glycans"/>
</dbReference>
<dbReference type="GlyGen" id="Q0VC22">
    <property type="glycosylation" value="4 sites"/>
</dbReference>
<dbReference type="PaxDb" id="9913-ENSBTAP00000039644"/>
<dbReference type="GeneID" id="618664"/>
<dbReference type="KEGG" id="bta:618664"/>
<dbReference type="eggNOG" id="ENOG502SKQR">
    <property type="taxonomic scope" value="Eukaryota"/>
</dbReference>
<dbReference type="InParanoid" id="Q0VC22"/>
<dbReference type="OrthoDB" id="423533at2759"/>
<dbReference type="Proteomes" id="UP000009136">
    <property type="component" value="Unplaced"/>
</dbReference>
<dbReference type="GO" id="GO:0005576">
    <property type="term" value="C:extracellular region"/>
    <property type="evidence" value="ECO:0007669"/>
    <property type="project" value="UniProtKB-SubCell"/>
</dbReference>
<dbReference type="GO" id="GO:0016020">
    <property type="term" value="C:membrane"/>
    <property type="evidence" value="ECO:0007669"/>
    <property type="project" value="UniProtKB-SubCell"/>
</dbReference>
<dbReference type="GO" id="GO:0003950">
    <property type="term" value="F:NAD+ poly-ADP-ribosyltransferase activity"/>
    <property type="evidence" value="ECO:0000318"/>
    <property type="project" value="GO_Central"/>
</dbReference>
<dbReference type="GO" id="GO:0106274">
    <property type="term" value="F:NAD+-protein-arginine ADP-ribosyltransferase activity"/>
    <property type="evidence" value="ECO:0007669"/>
    <property type="project" value="UniProtKB-EC"/>
</dbReference>
<dbReference type="GO" id="GO:0016779">
    <property type="term" value="F:nucleotidyltransferase activity"/>
    <property type="evidence" value="ECO:0007669"/>
    <property type="project" value="UniProtKB-KW"/>
</dbReference>
<dbReference type="FunFam" id="3.90.176.10:FF:000001">
    <property type="entry name" value="NAD(P)(+)--arginine ADP-ribosyltransferase"/>
    <property type="match status" value="1"/>
</dbReference>
<dbReference type="Gene3D" id="3.90.176.10">
    <property type="entry name" value="Toxin ADP-ribosyltransferase, Chain A, domain 1"/>
    <property type="match status" value="1"/>
</dbReference>
<dbReference type="InterPro" id="IPR050999">
    <property type="entry name" value="ADP-ribosyltransferase_ARG"/>
</dbReference>
<dbReference type="InterPro" id="IPR000768">
    <property type="entry name" value="ART"/>
</dbReference>
<dbReference type="PANTHER" id="PTHR10339">
    <property type="entry name" value="ADP-RIBOSYLTRANSFERASE"/>
    <property type="match status" value="1"/>
</dbReference>
<dbReference type="PANTHER" id="PTHR10339:SF2">
    <property type="entry name" value="ECTO-ADP-RIBOSYLTRANSFERASE 5"/>
    <property type="match status" value="1"/>
</dbReference>
<dbReference type="Pfam" id="PF01129">
    <property type="entry name" value="ART"/>
    <property type="match status" value="1"/>
</dbReference>
<dbReference type="PRINTS" id="PR00970">
    <property type="entry name" value="RIBTRNSFRASE"/>
</dbReference>
<dbReference type="SUPFAM" id="SSF56399">
    <property type="entry name" value="ADP-ribosylation"/>
    <property type="match status" value="1"/>
</dbReference>
<dbReference type="PROSITE" id="PS01291">
    <property type="entry name" value="ART"/>
    <property type="match status" value="1"/>
</dbReference>
<dbReference type="PROSITE" id="PS51996">
    <property type="entry name" value="TR_MART"/>
    <property type="match status" value="1"/>
</dbReference>
<name>NAR5_BOVIN</name>
<keyword id="KW-1015">Disulfide bond</keyword>
<keyword id="KW-0325">Glycoprotein</keyword>
<keyword id="KW-0328">Glycosyltransferase</keyword>
<keyword id="KW-0472">Membrane</keyword>
<keyword id="KW-0520">NAD</keyword>
<keyword id="KW-0521">NADP</keyword>
<keyword id="KW-0548">Nucleotidyltransferase</keyword>
<keyword id="KW-1185">Reference proteome</keyword>
<keyword id="KW-0964">Secreted</keyword>
<keyword id="KW-0732">Signal</keyword>
<keyword id="KW-0808">Transferase</keyword>
<proteinExistence type="evidence at transcript level"/>
<protein>
    <recommendedName>
        <fullName>Ecto-ADP-ribosyltransferase 5</fullName>
        <ecNumber>2.4.2.31</ecNumber>
    </recommendedName>
    <alternativeName>
        <fullName>ADP-ribosyltransferase C2 and C3 toxin-like 5</fullName>
        <shortName>ARTC5</shortName>
    </alternativeName>
    <alternativeName>
        <fullName>Mono(ADP-ribosyl)transferase 5</fullName>
    </alternativeName>
    <alternativeName>
        <fullName>NAD(P)(+)--arginine ADP-ribosyltransferase 5</fullName>
    </alternativeName>
</protein>
<organism>
    <name type="scientific">Bos taurus</name>
    <name type="common">Bovine</name>
    <dbReference type="NCBI Taxonomy" id="9913"/>
    <lineage>
        <taxon>Eukaryota</taxon>
        <taxon>Metazoa</taxon>
        <taxon>Chordata</taxon>
        <taxon>Craniata</taxon>
        <taxon>Vertebrata</taxon>
        <taxon>Euteleostomi</taxon>
        <taxon>Mammalia</taxon>
        <taxon>Eutheria</taxon>
        <taxon>Laurasiatheria</taxon>
        <taxon>Artiodactyla</taxon>
        <taxon>Ruminantia</taxon>
        <taxon>Pecora</taxon>
        <taxon>Bovidae</taxon>
        <taxon>Bovinae</taxon>
        <taxon>Bos</taxon>
    </lineage>
</organism>
<reference key="1">
    <citation type="submission" date="2006-08" db="EMBL/GenBank/DDBJ databases">
        <authorList>
            <consortium name="NIH - Mammalian Gene Collection (MGC) project"/>
        </authorList>
    </citation>
    <scope>NUCLEOTIDE SEQUENCE [LARGE SCALE MRNA]</scope>
    <source>
        <strain>Hereford</strain>
        <tissue>Fetal muscle</tissue>
    </source>
</reference>
<comment type="catalytic activity">
    <reaction>
        <text>L-arginyl-[protein] + NAD(+) = N(omega)-(ADP-D-ribosyl)-L-arginyl-[protein] + nicotinamide + H(+)</text>
        <dbReference type="Rhea" id="RHEA:19149"/>
        <dbReference type="Rhea" id="RHEA-COMP:10532"/>
        <dbReference type="Rhea" id="RHEA-COMP:15087"/>
        <dbReference type="ChEBI" id="CHEBI:15378"/>
        <dbReference type="ChEBI" id="CHEBI:17154"/>
        <dbReference type="ChEBI" id="CHEBI:29965"/>
        <dbReference type="ChEBI" id="CHEBI:57540"/>
        <dbReference type="ChEBI" id="CHEBI:142554"/>
        <dbReference type="EC" id="2.4.2.31"/>
    </reaction>
</comment>
<comment type="subcellular location">
    <subcellularLocation>
        <location evidence="4">Secreted</location>
    </subcellularLocation>
    <subcellularLocation>
        <location evidence="4">Membrane</location>
    </subcellularLocation>
    <text evidence="4">Membrane-associated.</text>
</comment>
<comment type="similarity">
    <text evidence="4">Belongs to the Arg-specific ADP-ribosyltransferase family.</text>
</comment>
<feature type="signal peptide" evidence="2">
    <location>
        <begin position="1"/>
        <end position="23"/>
    </location>
</feature>
<feature type="chain" id="PRO_0000379471" description="Ecto-ADP-ribosyltransferase 5">
    <location>
        <begin position="24"/>
        <end position="316"/>
    </location>
</feature>
<feature type="domain" description="TR mART core" evidence="3">
    <location>
        <begin position="70"/>
        <end position="261"/>
    </location>
</feature>
<feature type="active site" evidence="3">
    <location>
        <position position="168"/>
    </location>
</feature>
<feature type="active site" evidence="3">
    <location>
        <position position="191"/>
    </location>
</feature>
<feature type="active site" evidence="3">
    <location>
        <position position="229"/>
    </location>
</feature>
<feature type="binding site" evidence="1">
    <location>
        <position position="107"/>
    </location>
    <ligand>
        <name>NAD(+)</name>
        <dbReference type="ChEBI" id="CHEBI:57540"/>
    </ligand>
</feature>
<feature type="binding site" evidence="1">
    <location>
        <position position="168"/>
    </location>
    <ligand>
        <name>NAD(+)</name>
        <dbReference type="ChEBI" id="CHEBI:57540"/>
    </ligand>
</feature>
<feature type="binding site" evidence="1">
    <location>
        <position position="188"/>
    </location>
    <ligand>
        <name>NAD(+)</name>
        <dbReference type="ChEBI" id="CHEBI:57540"/>
    </ligand>
</feature>
<feature type="binding site" evidence="1">
    <location>
        <position position="222"/>
    </location>
    <ligand>
        <name>NAD(+)</name>
        <dbReference type="ChEBI" id="CHEBI:57540"/>
    </ligand>
</feature>
<feature type="glycosylation site" description="N-linked (GlcNAc...) asparagine" evidence="2">
    <location>
        <position position="68"/>
    </location>
</feature>
<feature type="glycosylation site" description="N-linked (GlcNAc...) asparagine" evidence="2">
    <location>
        <position position="109"/>
    </location>
</feature>
<feature type="glycosylation site" description="N-linked (GlcNAc...) asparagine" evidence="2">
    <location>
        <position position="242"/>
    </location>
</feature>
<feature type="glycosylation site" description="N-linked (GlcNAc...) asparagine" evidence="2">
    <location>
        <position position="248"/>
    </location>
</feature>
<feature type="disulfide bond" evidence="1">
    <location>
        <begin position="50"/>
        <end position="266"/>
    </location>
</feature>
<gene>
    <name type="primary">ART5</name>
</gene>
<sequence>MIQATLLISLSCLSFYTLGSGVRRYDPGQGVTIQYLSLAPDTFDDAYVGCSEEMEEKAVLLLEKEMANHTRLRESWETAQKAWEQKRAGLTLPPGFRSQHGIAIMVYTNSSNTLYRELNQAVRTGGGSWESYMKHFPFKALHFYLTRALQLLRGGGGCSREPRQEVFRGVRRIHFVPKSVGDSIRLGQFASSSLDEAVACGFGSATFFSLRTCSGAPIQALSVFPEEREVLIPPYEVFVVSNFSKDGNKSLMTLSSSDQMCSHFNCAYLGEKKRPSCEFVPIGGQGDSLSKGAFSLLSWKTLLLASWGFQLLGAGL</sequence>